<protein>
    <recommendedName>
        <fullName>B9 domain-containing protein 2</fullName>
    </recommendedName>
</protein>
<comment type="function">
    <text evidence="1">Component of the tectonic-like complex, a complex localized at the transition zone of primary cilia and acting as a barrier that prevents diffusion of transmembrane proteins between the cilia and plasma membranes.</text>
</comment>
<comment type="subunit">
    <text evidence="1">Part of the tectonic-like complex (also named B9 complex).</text>
</comment>
<comment type="subcellular location">
    <subcellularLocation>
        <location evidence="1">Cytoplasm</location>
        <location evidence="1">Cytoskeleton</location>
        <location evidence="1">Cilium basal body</location>
    </subcellularLocation>
    <subcellularLocation>
        <location evidence="1">Cytoplasm</location>
        <location evidence="1">Cytoskeleton</location>
        <location evidence="1">Cilium axoneme</location>
    </subcellularLocation>
</comment>
<comment type="similarity">
    <text evidence="3">Belongs to the B9D family.</text>
</comment>
<proteinExistence type="evidence at transcript level"/>
<reference key="1">
    <citation type="submission" date="2004-06" db="EMBL/GenBank/DDBJ databases">
        <authorList>
            <consortium name="NIH - Xenopus Gene Collection (XGC) project"/>
        </authorList>
    </citation>
    <scope>NUCLEOTIDE SEQUENCE [LARGE SCALE MRNA]</scope>
    <source>
        <tissue>Embryo</tissue>
    </source>
</reference>
<keyword id="KW-0966">Cell projection</keyword>
<keyword id="KW-0969">Cilium</keyword>
<keyword id="KW-0970">Cilium biogenesis/degradation</keyword>
<keyword id="KW-0963">Cytoplasm</keyword>
<keyword id="KW-0206">Cytoskeleton</keyword>
<keyword id="KW-1185">Reference proteome</keyword>
<dbReference type="EMBL" id="BC073648">
    <property type="protein sequence ID" value="AAH73648.1"/>
    <property type="molecule type" value="mRNA"/>
</dbReference>
<dbReference type="RefSeq" id="NP_001085984.1">
    <property type="nucleotide sequence ID" value="NM_001092515.1"/>
</dbReference>
<dbReference type="DNASU" id="444413"/>
<dbReference type="GeneID" id="444413"/>
<dbReference type="KEGG" id="xla:444413"/>
<dbReference type="AGR" id="Xenbase:XB-GENE-6078641"/>
<dbReference type="CTD" id="444413"/>
<dbReference type="Xenbase" id="XB-GENE-6078641">
    <property type="gene designation" value="b9d2.L"/>
</dbReference>
<dbReference type="OMA" id="DVAYWCH"/>
<dbReference type="OrthoDB" id="184109at2759"/>
<dbReference type="Proteomes" id="UP000186698">
    <property type="component" value="Chromosome 8L"/>
</dbReference>
<dbReference type="Bgee" id="444413">
    <property type="expression patterns" value="Expressed in egg cell and 19 other cell types or tissues"/>
</dbReference>
<dbReference type="GO" id="GO:0005813">
    <property type="term" value="C:centrosome"/>
    <property type="evidence" value="ECO:0000250"/>
    <property type="project" value="UniProtKB"/>
</dbReference>
<dbReference type="GO" id="GO:0036064">
    <property type="term" value="C:ciliary basal body"/>
    <property type="evidence" value="ECO:0000250"/>
    <property type="project" value="UniProtKB"/>
</dbReference>
<dbReference type="GO" id="GO:0005737">
    <property type="term" value="C:cytoplasm"/>
    <property type="evidence" value="ECO:0007669"/>
    <property type="project" value="UniProtKB-KW"/>
</dbReference>
<dbReference type="GO" id="GO:0036038">
    <property type="term" value="C:MKS complex"/>
    <property type="evidence" value="ECO:0000250"/>
    <property type="project" value="UniProtKB"/>
</dbReference>
<dbReference type="GO" id="GO:0043015">
    <property type="term" value="F:gamma-tubulin binding"/>
    <property type="evidence" value="ECO:0000250"/>
    <property type="project" value="UniProtKB"/>
</dbReference>
<dbReference type="GO" id="GO:0060271">
    <property type="term" value="P:cilium assembly"/>
    <property type="evidence" value="ECO:0000250"/>
    <property type="project" value="UniProtKB"/>
</dbReference>
<dbReference type="InterPro" id="IPR010796">
    <property type="entry name" value="C2_B9-type_dom"/>
</dbReference>
<dbReference type="PANTHER" id="PTHR12968">
    <property type="entry name" value="B9 DOMAIN-CONTAINING"/>
    <property type="match status" value="1"/>
</dbReference>
<dbReference type="PANTHER" id="PTHR12968:SF2">
    <property type="entry name" value="B9 DOMAIN-CONTAINING PROTEIN 2"/>
    <property type="match status" value="1"/>
</dbReference>
<dbReference type="Pfam" id="PF07162">
    <property type="entry name" value="B9-C2"/>
    <property type="match status" value="1"/>
</dbReference>
<dbReference type="PROSITE" id="PS51381">
    <property type="entry name" value="C2_B9"/>
    <property type="match status" value="1"/>
</dbReference>
<sequence length="176" mass="19767">MAEVHIIGQIIGASGFPQHSLFCKWGLHTGGAWKLLSGVVEGQTQVDHPQNDDMAFWSHPIDMHFATKGLQGWPKLHLQVWHQDTFGRNELYGYSFLHIPSTPGTHTLLSPTWRPLGTWQEQICQMFVGGGPQLKSASLIYGGSDRYRLQTVAMGQVHLELTVILRNFERYGVESS</sequence>
<feature type="chain" id="PRO_0000307678" description="B9 domain-containing protein 2">
    <location>
        <begin position="1"/>
        <end position="176"/>
    </location>
</feature>
<feature type="domain" description="C2 B9-type" evidence="2">
    <location>
        <begin position="2"/>
        <end position="118"/>
    </location>
</feature>
<evidence type="ECO:0000250" key="1"/>
<evidence type="ECO:0000255" key="2">
    <source>
        <dbReference type="PROSITE-ProRule" id="PRU00713"/>
    </source>
</evidence>
<evidence type="ECO:0000305" key="3"/>
<accession>Q6GN70</accession>
<name>B9D2_XENLA</name>
<gene>
    <name type="primary">b9d2</name>
</gene>
<organism>
    <name type="scientific">Xenopus laevis</name>
    <name type="common">African clawed frog</name>
    <dbReference type="NCBI Taxonomy" id="8355"/>
    <lineage>
        <taxon>Eukaryota</taxon>
        <taxon>Metazoa</taxon>
        <taxon>Chordata</taxon>
        <taxon>Craniata</taxon>
        <taxon>Vertebrata</taxon>
        <taxon>Euteleostomi</taxon>
        <taxon>Amphibia</taxon>
        <taxon>Batrachia</taxon>
        <taxon>Anura</taxon>
        <taxon>Pipoidea</taxon>
        <taxon>Pipidae</taxon>
        <taxon>Xenopodinae</taxon>
        <taxon>Xenopus</taxon>
        <taxon>Xenopus</taxon>
    </lineage>
</organism>